<gene>
    <name evidence="1" type="primary">folE2</name>
    <name type="ordered locus">OB1688</name>
</gene>
<name>GCH4_OCEIH</name>
<accession>Q8EQK9</accession>
<reference key="1">
    <citation type="journal article" date="2002" name="Nucleic Acids Res.">
        <title>Genome sequence of Oceanobacillus iheyensis isolated from the Iheya Ridge and its unexpected adaptive capabilities to extreme environments.</title>
        <authorList>
            <person name="Takami H."/>
            <person name="Takaki Y."/>
            <person name="Uchiyama I."/>
        </authorList>
    </citation>
    <scope>NUCLEOTIDE SEQUENCE [LARGE SCALE GENOMIC DNA]</scope>
    <source>
        <strain>DSM 14371 / CIP 107618 / JCM 11309 / KCTC 3954 / HTE831</strain>
    </source>
</reference>
<comment type="function">
    <text evidence="1">Converts GTP to 7,8-dihydroneopterin triphosphate.</text>
</comment>
<comment type="catalytic activity">
    <reaction evidence="1">
        <text>GTP + H2O = 7,8-dihydroneopterin 3'-triphosphate + formate + H(+)</text>
        <dbReference type="Rhea" id="RHEA:17473"/>
        <dbReference type="ChEBI" id="CHEBI:15377"/>
        <dbReference type="ChEBI" id="CHEBI:15378"/>
        <dbReference type="ChEBI" id="CHEBI:15740"/>
        <dbReference type="ChEBI" id="CHEBI:37565"/>
        <dbReference type="ChEBI" id="CHEBI:58462"/>
        <dbReference type="EC" id="3.5.4.16"/>
    </reaction>
</comment>
<comment type="pathway">
    <text evidence="1">Cofactor biosynthesis; 7,8-dihydroneopterin triphosphate biosynthesis; 7,8-dihydroneopterin triphosphate from GTP: step 1/1.</text>
</comment>
<comment type="similarity">
    <text evidence="1">Belongs to the GTP cyclohydrolase IV family.</text>
</comment>
<comment type="sequence caution" evidence="3">
    <conflict type="erroneous initiation">
        <sequence resource="EMBL-CDS" id="BAC13644"/>
    </conflict>
</comment>
<sequence>MPKKQLPPKEERHKLFGSVPPKERTKPIEKNKMADLQNTKRDFLFKLDAVGISNVKYPVIIHSDLAPKEQTSIGTFEFSSSIPTMSKGTNMSRFMELLQEYSSSGMNVSISELKRFTKELSGKLEQKDATIEVSFPWFFERKGPESQSAGMNHADAKLSVTYDSNSGFSIDVSLSAWITTLCPCSKEISEYSAHNQRGNVTLEATLVEDFDEAKIDWKLALLEAAESNASARLHPVLKRTDEKMVTEQAYENPRFVEDMVRLIAADLYEMPFVSKFHVSCRNEESIHMHDAIASITYDKSSE</sequence>
<proteinExistence type="inferred from homology"/>
<keyword id="KW-0378">Hydrolase</keyword>
<keyword id="KW-1185">Reference proteome</keyword>
<organism>
    <name type="scientific">Oceanobacillus iheyensis (strain DSM 14371 / CIP 107618 / JCM 11309 / KCTC 3954 / HTE831)</name>
    <dbReference type="NCBI Taxonomy" id="221109"/>
    <lineage>
        <taxon>Bacteria</taxon>
        <taxon>Bacillati</taxon>
        <taxon>Bacillota</taxon>
        <taxon>Bacilli</taxon>
        <taxon>Bacillales</taxon>
        <taxon>Bacillaceae</taxon>
        <taxon>Oceanobacillus</taxon>
    </lineage>
</organism>
<protein>
    <recommendedName>
        <fullName evidence="1">GTP cyclohydrolase FolE2</fullName>
        <ecNumber evidence="1">3.5.4.16</ecNumber>
    </recommendedName>
</protein>
<dbReference type="EC" id="3.5.4.16" evidence="1"/>
<dbReference type="EMBL" id="BA000028">
    <property type="protein sequence ID" value="BAC13644.1"/>
    <property type="status" value="ALT_INIT"/>
    <property type="molecule type" value="Genomic_DNA"/>
</dbReference>
<dbReference type="RefSeq" id="WP_011066089.1">
    <property type="nucleotide sequence ID" value="NC_004193.1"/>
</dbReference>
<dbReference type="SMR" id="Q8EQK9"/>
<dbReference type="STRING" id="221109.gene:10733928"/>
<dbReference type="KEGG" id="oih:OB1688"/>
<dbReference type="eggNOG" id="COG1469">
    <property type="taxonomic scope" value="Bacteria"/>
</dbReference>
<dbReference type="HOGENOM" id="CLU_062816_1_1_9"/>
<dbReference type="OrthoDB" id="9774824at2"/>
<dbReference type="PhylomeDB" id="Q8EQK9"/>
<dbReference type="UniPathway" id="UPA00848">
    <property type="reaction ID" value="UER00151"/>
</dbReference>
<dbReference type="Proteomes" id="UP000000822">
    <property type="component" value="Chromosome"/>
</dbReference>
<dbReference type="GO" id="GO:0003934">
    <property type="term" value="F:GTP cyclohydrolase I activity"/>
    <property type="evidence" value="ECO:0007669"/>
    <property type="project" value="UniProtKB-UniRule"/>
</dbReference>
<dbReference type="GO" id="GO:0046654">
    <property type="term" value="P:tetrahydrofolate biosynthetic process"/>
    <property type="evidence" value="ECO:0007669"/>
    <property type="project" value="UniProtKB-UniRule"/>
</dbReference>
<dbReference type="Gene3D" id="3.10.270.10">
    <property type="entry name" value="Urate Oxidase"/>
    <property type="match status" value="1"/>
</dbReference>
<dbReference type="HAMAP" id="MF_01527_B">
    <property type="entry name" value="GTP_cyclohydrol_B"/>
    <property type="match status" value="1"/>
</dbReference>
<dbReference type="InterPro" id="IPR022838">
    <property type="entry name" value="GTP_cyclohydrolase_FolE2"/>
</dbReference>
<dbReference type="InterPro" id="IPR003801">
    <property type="entry name" value="GTP_cyclohydrolase_FolE2/MptA"/>
</dbReference>
<dbReference type="NCBIfam" id="NF010200">
    <property type="entry name" value="PRK13674.1-1"/>
    <property type="match status" value="1"/>
</dbReference>
<dbReference type="PANTHER" id="PTHR36445">
    <property type="entry name" value="GTP CYCLOHYDROLASE MPTA"/>
    <property type="match status" value="1"/>
</dbReference>
<dbReference type="PANTHER" id="PTHR36445:SF1">
    <property type="entry name" value="GTP CYCLOHYDROLASE MPTA"/>
    <property type="match status" value="1"/>
</dbReference>
<dbReference type="Pfam" id="PF02649">
    <property type="entry name" value="GCHY-1"/>
    <property type="match status" value="1"/>
</dbReference>
<evidence type="ECO:0000255" key="1">
    <source>
        <dbReference type="HAMAP-Rule" id="MF_01527"/>
    </source>
</evidence>
<evidence type="ECO:0000256" key="2">
    <source>
        <dbReference type="SAM" id="MobiDB-lite"/>
    </source>
</evidence>
<evidence type="ECO:0000305" key="3"/>
<feature type="chain" id="PRO_0000147718" description="GTP cyclohydrolase FolE2">
    <location>
        <begin position="1"/>
        <end position="302"/>
    </location>
</feature>
<feature type="region of interest" description="Disordered" evidence="2">
    <location>
        <begin position="1"/>
        <end position="27"/>
    </location>
</feature>
<feature type="site" description="May be catalytically important" evidence="1">
    <location>
        <position position="182"/>
    </location>
</feature>